<evidence type="ECO:0000255" key="1">
    <source>
        <dbReference type="HAMAP-Rule" id="MF_01337"/>
    </source>
</evidence>
<evidence type="ECO:0000305" key="2"/>
<organism>
    <name type="scientific">Burkholderia mallei (strain NCTC 10247)</name>
    <dbReference type="NCBI Taxonomy" id="320389"/>
    <lineage>
        <taxon>Bacteria</taxon>
        <taxon>Pseudomonadati</taxon>
        <taxon>Pseudomonadota</taxon>
        <taxon>Betaproteobacteria</taxon>
        <taxon>Burkholderiales</taxon>
        <taxon>Burkholderiaceae</taxon>
        <taxon>Burkholderia</taxon>
        <taxon>pseudomallei group</taxon>
    </lineage>
</organism>
<keyword id="KW-0687">Ribonucleoprotein</keyword>
<keyword id="KW-0689">Ribosomal protein</keyword>
<keyword id="KW-0694">RNA-binding</keyword>
<keyword id="KW-0699">rRNA-binding</keyword>
<dbReference type="EMBL" id="CP000548">
    <property type="protein sequence ID" value="ABO05161.1"/>
    <property type="molecule type" value="Genomic_DNA"/>
</dbReference>
<dbReference type="RefSeq" id="WP_004197946.1">
    <property type="nucleotide sequence ID" value="NZ_CP007802.1"/>
</dbReference>
<dbReference type="SMR" id="A3MRX0"/>
<dbReference type="GeneID" id="93061816"/>
<dbReference type="KEGG" id="bmaz:BM44_3025"/>
<dbReference type="KEGG" id="bmn:BMA10247_3494"/>
<dbReference type="PATRIC" id="fig|320389.8.peg.3397"/>
<dbReference type="GO" id="GO:0022625">
    <property type="term" value="C:cytosolic large ribosomal subunit"/>
    <property type="evidence" value="ECO:0007669"/>
    <property type="project" value="TreeGrafter"/>
</dbReference>
<dbReference type="GO" id="GO:0008097">
    <property type="term" value="F:5S rRNA binding"/>
    <property type="evidence" value="ECO:0007669"/>
    <property type="project" value="TreeGrafter"/>
</dbReference>
<dbReference type="GO" id="GO:0003735">
    <property type="term" value="F:structural constituent of ribosome"/>
    <property type="evidence" value="ECO:0007669"/>
    <property type="project" value="InterPro"/>
</dbReference>
<dbReference type="GO" id="GO:0006412">
    <property type="term" value="P:translation"/>
    <property type="evidence" value="ECO:0007669"/>
    <property type="project" value="UniProtKB-UniRule"/>
</dbReference>
<dbReference type="CDD" id="cd00432">
    <property type="entry name" value="Ribosomal_L18_L5e"/>
    <property type="match status" value="1"/>
</dbReference>
<dbReference type="FunFam" id="3.30.420.100:FF:000001">
    <property type="entry name" value="50S ribosomal protein L18"/>
    <property type="match status" value="1"/>
</dbReference>
<dbReference type="Gene3D" id="3.30.420.100">
    <property type="match status" value="1"/>
</dbReference>
<dbReference type="HAMAP" id="MF_01337_B">
    <property type="entry name" value="Ribosomal_uL18_B"/>
    <property type="match status" value="1"/>
</dbReference>
<dbReference type="InterPro" id="IPR004389">
    <property type="entry name" value="Ribosomal_uL18_bac-type"/>
</dbReference>
<dbReference type="InterPro" id="IPR005484">
    <property type="entry name" value="Ribosomal_uL18_bac/euk"/>
</dbReference>
<dbReference type="NCBIfam" id="TIGR00060">
    <property type="entry name" value="L18_bact"/>
    <property type="match status" value="1"/>
</dbReference>
<dbReference type="PANTHER" id="PTHR12899">
    <property type="entry name" value="39S RIBOSOMAL PROTEIN L18, MITOCHONDRIAL"/>
    <property type="match status" value="1"/>
</dbReference>
<dbReference type="PANTHER" id="PTHR12899:SF3">
    <property type="entry name" value="LARGE RIBOSOMAL SUBUNIT PROTEIN UL18M"/>
    <property type="match status" value="1"/>
</dbReference>
<dbReference type="Pfam" id="PF00861">
    <property type="entry name" value="Ribosomal_L18p"/>
    <property type="match status" value="1"/>
</dbReference>
<dbReference type="SUPFAM" id="SSF53137">
    <property type="entry name" value="Translational machinery components"/>
    <property type="match status" value="1"/>
</dbReference>
<proteinExistence type="inferred from homology"/>
<sequence>MDKTQSRLRRARQTRIKIAELQVARLAVHRTNTHIYAQVFSPCGTKVLASASTLEAEVRAQLADKSGKGGNVAAATLIGKRIAEKAKAAGIESVAFDRSGFRYHGRVKALAEAAREAGLKF</sequence>
<protein>
    <recommendedName>
        <fullName evidence="1">Large ribosomal subunit protein uL18</fullName>
    </recommendedName>
    <alternativeName>
        <fullName evidence="2">50S ribosomal protein L18</fullName>
    </alternativeName>
</protein>
<reference key="1">
    <citation type="journal article" date="2010" name="Genome Biol. Evol.">
        <title>Continuing evolution of Burkholderia mallei through genome reduction and large-scale rearrangements.</title>
        <authorList>
            <person name="Losada L."/>
            <person name="Ronning C.M."/>
            <person name="DeShazer D."/>
            <person name="Woods D."/>
            <person name="Fedorova N."/>
            <person name="Kim H.S."/>
            <person name="Shabalina S.A."/>
            <person name="Pearson T.R."/>
            <person name="Brinkac L."/>
            <person name="Tan P."/>
            <person name="Nandi T."/>
            <person name="Crabtree J."/>
            <person name="Badger J."/>
            <person name="Beckstrom-Sternberg S."/>
            <person name="Saqib M."/>
            <person name="Schutzer S.E."/>
            <person name="Keim P."/>
            <person name="Nierman W.C."/>
        </authorList>
    </citation>
    <scope>NUCLEOTIDE SEQUENCE [LARGE SCALE GENOMIC DNA]</scope>
    <source>
        <strain>NCTC 10247</strain>
    </source>
</reference>
<name>RL18_BURM7</name>
<accession>A3MRX0</accession>
<comment type="function">
    <text evidence="1">This is one of the proteins that bind and probably mediate the attachment of the 5S RNA into the large ribosomal subunit, where it forms part of the central protuberance.</text>
</comment>
<comment type="subunit">
    <text evidence="1">Part of the 50S ribosomal subunit; part of the 5S rRNA/L5/L18/L25 subcomplex. Contacts the 5S and 23S rRNAs.</text>
</comment>
<comment type="similarity">
    <text evidence="1">Belongs to the universal ribosomal protein uL18 family.</text>
</comment>
<gene>
    <name evidence="1" type="primary">rplR</name>
    <name type="ordered locus">BMA10247_3494</name>
</gene>
<feature type="chain" id="PRO_1000052997" description="Large ribosomal subunit protein uL18">
    <location>
        <begin position="1"/>
        <end position="121"/>
    </location>
</feature>